<feature type="chain" id="PRO_0000073016" description="Vacuolar protein sorting-associated protein 26C">
    <location>
        <begin position="1"/>
        <end position="297"/>
    </location>
</feature>
<feature type="splice variant" id="VSP_056598" description="In isoform 2." evidence="6">
    <location>
        <begin position="118"/>
        <end position="144"/>
    </location>
</feature>
<feature type="strand" evidence="14">
    <location>
        <begin position="5"/>
        <end position="13"/>
    </location>
</feature>
<feature type="strand" evidence="14">
    <location>
        <begin position="20"/>
        <end position="28"/>
    </location>
</feature>
<feature type="strand" evidence="14">
    <location>
        <begin position="39"/>
        <end position="49"/>
    </location>
</feature>
<feature type="turn" evidence="14">
    <location>
        <begin position="62"/>
        <end position="65"/>
    </location>
</feature>
<feature type="strand" evidence="14">
    <location>
        <begin position="69"/>
        <end position="79"/>
    </location>
</feature>
<feature type="strand" evidence="15">
    <location>
        <begin position="81"/>
        <end position="84"/>
    </location>
</feature>
<feature type="strand" evidence="14">
    <location>
        <begin position="89"/>
        <end position="96"/>
    </location>
</feature>
<feature type="turn" evidence="14">
    <location>
        <begin position="100"/>
        <end position="102"/>
    </location>
</feature>
<feature type="strand" evidence="14">
    <location>
        <begin position="112"/>
        <end position="124"/>
    </location>
</feature>
<feature type="strand" evidence="14">
    <location>
        <begin position="133"/>
        <end position="138"/>
    </location>
</feature>
<feature type="strand" evidence="14">
    <location>
        <begin position="155"/>
        <end position="159"/>
    </location>
</feature>
<feature type="helix" evidence="15">
    <location>
        <begin position="161"/>
        <end position="163"/>
    </location>
</feature>
<feature type="helix" evidence="14">
    <location>
        <begin position="167"/>
        <end position="170"/>
    </location>
</feature>
<feature type="strand" evidence="14">
    <location>
        <begin position="176"/>
        <end position="183"/>
    </location>
</feature>
<feature type="strand" evidence="14">
    <location>
        <begin position="193"/>
        <end position="204"/>
    </location>
</feature>
<feature type="strand" evidence="14">
    <location>
        <begin position="206"/>
        <end position="220"/>
    </location>
</feature>
<feature type="strand" evidence="14">
    <location>
        <begin position="226"/>
        <end position="241"/>
    </location>
</feature>
<feature type="strand" evidence="14">
    <location>
        <begin position="247"/>
        <end position="252"/>
    </location>
</feature>
<feature type="turn" evidence="14">
    <location>
        <begin position="256"/>
        <end position="258"/>
    </location>
</feature>
<feature type="strand" evidence="14">
    <location>
        <begin position="263"/>
        <end position="265"/>
    </location>
</feature>
<feature type="strand" evidence="14">
    <location>
        <begin position="268"/>
        <end position="280"/>
    </location>
</feature>
<feature type="turn" evidence="14">
    <location>
        <begin position="281"/>
        <end position="283"/>
    </location>
</feature>
<feature type="strand" evidence="14">
    <location>
        <begin position="284"/>
        <end position="292"/>
    </location>
</feature>
<evidence type="ECO:0000269" key="1">
    <source>
    </source>
</evidence>
<evidence type="ECO:0000269" key="2">
    <source>
    </source>
</evidence>
<evidence type="ECO:0000269" key="3">
    <source>
    </source>
</evidence>
<evidence type="ECO:0000269" key="4">
    <source>
    </source>
</evidence>
<evidence type="ECO:0000269" key="5">
    <source>
    </source>
</evidence>
<evidence type="ECO:0000303" key="6">
    <source>
    </source>
</evidence>
<evidence type="ECO:0000305" key="7"/>
<evidence type="ECO:0000305" key="8">
    <source>
    </source>
</evidence>
<evidence type="ECO:0000312" key="9">
    <source>
        <dbReference type="HGNC" id="HGNC:3044"/>
    </source>
</evidence>
<evidence type="ECO:0007744" key="10">
    <source>
        <dbReference type="PDB" id="8P0X"/>
    </source>
</evidence>
<evidence type="ECO:0007744" key="11">
    <source>
        <dbReference type="PDB" id="8SYN"/>
    </source>
</evidence>
<evidence type="ECO:0007744" key="12">
    <source>
        <dbReference type="PDB" id="8SYO"/>
    </source>
</evidence>
<evidence type="ECO:0007744" key="13">
    <source>
        <dbReference type="PDB" id="9AU7"/>
    </source>
</evidence>
<evidence type="ECO:0007829" key="14">
    <source>
        <dbReference type="PDB" id="8SYN"/>
    </source>
</evidence>
<evidence type="ECO:0007829" key="15">
    <source>
        <dbReference type="PDB" id="9AU7"/>
    </source>
</evidence>
<organism>
    <name type="scientific">Homo sapiens</name>
    <name type="common">Human</name>
    <dbReference type="NCBI Taxonomy" id="9606"/>
    <lineage>
        <taxon>Eukaryota</taxon>
        <taxon>Metazoa</taxon>
        <taxon>Chordata</taxon>
        <taxon>Craniata</taxon>
        <taxon>Vertebrata</taxon>
        <taxon>Euteleostomi</taxon>
        <taxon>Mammalia</taxon>
        <taxon>Eutheria</taxon>
        <taxon>Euarchontoglires</taxon>
        <taxon>Primates</taxon>
        <taxon>Haplorrhini</taxon>
        <taxon>Catarrhini</taxon>
        <taxon>Hominidae</taxon>
        <taxon>Homo</taxon>
    </lineage>
</organism>
<comment type="function">
    <text evidence="1 2 3 4 5">Component of the commander complex that is essential for endosomal recycling of transmembrane cargos; the commander complex is composed of the CCC subcomplex and the retriever subcomplex (PubMed:37172566, PubMed:39587083, PubMed:38062209, PubMed:38459129). Component of the retriever complex, which is a heterotrimeric complex related to retromer cargo-selective complex (CSC) and essential for retromer-independent retrieval and recycling of numerous cargos such as integrin alpha-5/beta-1 (ITGA5:ITGB1) (PubMed:28892079, PubMed:37172566, PubMed:39587083, PubMed:38062209, PubMed:38459129). The recruitment of the retriever complex to the endosomal membrane involves CCC and WASH complexes (PubMed:28892079). In the endosomes, drives the retriever and recycling of NxxY-motif-containing cargo proteins by coupling to SNX17, a cargo essential for the homeostatic maintenance of numerous cell surface proteins associated with processes that include cell migration, cell adhesion, nutrient supply and cell signaling (PubMed:28892079, PubMed:39587083).</text>
</comment>
<comment type="function">
    <text evidence="1">(Microbial infection) The heterotrimeric retriever complex, in collaboration with the CCC complex, mediates the exit of human papillomavirus to the cell surface.</text>
</comment>
<comment type="subunit">
    <text evidence="1 2 3 4 5">Component of the commander complex that is essential for endosomal recycling of transmembrane cargos; the commander complex is composed of the CCC subcomplex and the retriever subcomplex (PubMed:37172566, PubMed:39587083, PubMed:38062209, PubMed:38459129). Component of the heterotrimeric retriever complex consisting of VPS26C, VPS29 and VPS35L; within the complex interacts with VPS35L (PubMed:37172566, PubMed:28892079, PubMed:39587083, PubMed:38062209, PubMed:38459129). Interacts with SNX17 (via C-terminus); the interaction is direct and associates SNX17 with the retriever complex (PubMed:28892079, PubMed:39587083). Interacts with SNX31; the interaction is direct (PubMed:28892079).</text>
</comment>
<comment type="interaction">
    <interactant intactId="EBI-7207091">
        <id>O14972</id>
    </interactant>
    <interactant intactId="EBI-744027">
        <id>Q13191</id>
        <label>CBLB</label>
    </interactant>
    <organismsDiffer>false</organismsDiffer>
    <experiments>3</experiments>
</comment>
<comment type="interaction">
    <interactant intactId="EBI-7207091">
        <id>O14972</id>
    </interactant>
    <interactant intactId="EBI-3937367">
        <id>Q9NUI1</id>
        <label>DECR2</label>
    </interactant>
    <organismsDiffer>false</organismsDiffer>
    <experiments>3</experiments>
</comment>
<comment type="interaction">
    <interactant intactId="EBI-7207091">
        <id>O14972</id>
    </interactant>
    <interactant intactId="EBI-6509505">
        <id>Q0VD86</id>
        <label>INCA1</label>
    </interactant>
    <organismsDiffer>false</organismsDiffer>
    <experiments>3</experiments>
</comment>
<comment type="interaction">
    <interactant intactId="EBI-7207091">
        <id>O14972</id>
    </interactant>
    <interactant intactId="EBI-473196">
        <id>Q5T3J3</id>
        <label>LRIF1</label>
    </interactant>
    <organismsDiffer>false</organismsDiffer>
    <experiments>3</experiments>
</comment>
<comment type="interaction">
    <interactant intactId="EBI-7207091">
        <id>O14972</id>
    </interactant>
    <interactant intactId="EBI-398437">
        <id>O15151</id>
        <label>MDM4</label>
    </interactant>
    <organismsDiffer>false</organismsDiffer>
    <experiments>3</experiments>
</comment>
<comment type="interaction">
    <interactant intactId="EBI-7207091">
        <id>O14972</id>
    </interactant>
    <interactant intactId="EBI-19944212">
        <id>A8MW99</id>
        <label>MEI4</label>
    </interactant>
    <organismsDiffer>false</organismsDiffer>
    <experiments>3</experiments>
</comment>
<comment type="interaction">
    <interactant intactId="EBI-7207091">
        <id>O14972</id>
    </interactant>
    <interactant intactId="EBI-16439278">
        <id>Q6FHY5</id>
        <label>MEOX2</label>
    </interactant>
    <organismsDiffer>false</organismsDiffer>
    <experiments>3</experiments>
</comment>
<comment type="interaction">
    <interactant intactId="EBI-7207091">
        <id>O14972</id>
    </interactant>
    <interactant intactId="EBI-2860264">
        <id>Q16825</id>
        <label>PTPN21</label>
    </interactant>
    <organismsDiffer>false</organismsDiffer>
    <experiments>3</experiments>
</comment>
<comment type="interaction">
    <interactant intactId="EBI-7207091">
        <id>O14972</id>
    </interactant>
    <interactant intactId="EBI-9089467">
        <id>Q96DA2</id>
        <label>RAB39B</label>
    </interactant>
    <organismsDiffer>false</organismsDiffer>
    <experiments>3</experiments>
</comment>
<comment type="interaction">
    <interactant intactId="EBI-7207091">
        <id>O14972</id>
    </interactant>
    <interactant intactId="EBI-11139477">
        <id>Q96N21</id>
        <label>TEPSIN</label>
    </interactant>
    <organismsDiffer>false</organismsDiffer>
    <experiments>3</experiments>
</comment>
<comment type="interaction">
    <interactant intactId="EBI-7207091">
        <id>O14972</id>
    </interactant>
    <interactant intactId="EBI-11080070">
        <id>Q7Z3J2</id>
        <label>VPS35L</label>
    </interactant>
    <organismsDiffer>false</organismsDiffer>
    <experiments>9</experiments>
</comment>
<comment type="interaction">
    <interactant intactId="EBI-7207091">
        <id>O14972</id>
    </interactant>
    <interactant intactId="EBI-295222">
        <id>P23025</id>
        <label>XPA</label>
    </interactant>
    <organismsDiffer>false</organismsDiffer>
    <experiments>3</experiments>
</comment>
<comment type="interaction">
    <interactant intactId="EBI-7207091">
        <id>O14972</id>
    </interactant>
    <interactant intactId="EBI-625509">
        <id>Q8N720</id>
        <label>ZNF655</label>
    </interactant>
    <organismsDiffer>false</organismsDiffer>
    <experiments>3</experiments>
</comment>
<comment type="subcellular location">
    <subcellularLocation>
        <location evidence="8">Endosome</location>
    </subcellularLocation>
</comment>
<comment type="alternative products">
    <event type="alternative splicing"/>
    <isoform>
        <id>O14972-1</id>
        <name>1</name>
        <sequence type="displayed"/>
    </isoform>
    <isoform>
        <id>O14972-2</id>
        <name>2</name>
        <sequence type="described" ref="VSP_056598"/>
    </isoform>
</comment>
<comment type="tissue specificity">
    <text>Ubiquitously expressed.</text>
</comment>
<comment type="similarity">
    <text evidence="7">Belongs to the VPS26 family.</text>
</comment>
<dbReference type="EMBL" id="D87343">
    <property type="protein sequence ID" value="BAA23225.1"/>
    <property type="molecule type" value="mRNA"/>
</dbReference>
<dbReference type="EMBL" id="AK300024">
    <property type="protein sequence ID" value="BAH13197.1"/>
    <property type="molecule type" value="mRNA"/>
</dbReference>
<dbReference type="EMBL" id="AK312707">
    <property type="protein sequence ID" value="BAG35585.1"/>
    <property type="molecule type" value="mRNA"/>
</dbReference>
<dbReference type="EMBL" id="AK316460">
    <property type="protein sequence ID" value="BAH14831.1"/>
    <property type="molecule type" value="mRNA"/>
</dbReference>
<dbReference type="EMBL" id="AP001412">
    <property type="status" value="NOT_ANNOTATED_CDS"/>
    <property type="molecule type" value="Genomic_DNA"/>
</dbReference>
<dbReference type="EMBL" id="AP001432">
    <property type="status" value="NOT_ANNOTATED_CDS"/>
    <property type="molecule type" value="Genomic_DNA"/>
</dbReference>
<dbReference type="EMBL" id="CH471079">
    <property type="protein sequence ID" value="EAX09714.1"/>
    <property type="molecule type" value="Genomic_DNA"/>
</dbReference>
<dbReference type="EMBL" id="BC110655">
    <property type="protein sequence ID" value="AAI10656.1"/>
    <property type="molecule type" value="mRNA"/>
</dbReference>
<dbReference type="CCDS" id="CCDS33553.1">
    <molecule id="O14972-1"/>
</dbReference>
<dbReference type="CCDS" id="CCDS82673.1">
    <molecule id="O14972-2"/>
</dbReference>
<dbReference type="PIR" id="JC5698">
    <property type="entry name" value="JC5698"/>
</dbReference>
<dbReference type="RefSeq" id="NP_001317947.1">
    <property type="nucleotide sequence ID" value="NM_001331018.1"/>
</dbReference>
<dbReference type="RefSeq" id="NP_001317951.1">
    <molecule id="O14972-2"/>
    <property type="nucleotide sequence ID" value="NM_001331022.1"/>
</dbReference>
<dbReference type="RefSeq" id="NP_006043.1">
    <molecule id="O14972-1"/>
    <property type="nucleotide sequence ID" value="NM_006052.2"/>
</dbReference>
<dbReference type="PDB" id="8P0X">
    <property type="method" value="EM"/>
    <property type="resolution" value="7.50 A"/>
    <property type="chains" value="P=1-297"/>
</dbReference>
<dbReference type="PDB" id="8SYN">
    <property type="method" value="EM"/>
    <property type="resolution" value="2.94 A"/>
    <property type="chains" value="C=1-297"/>
</dbReference>
<dbReference type="PDB" id="8SYO">
    <property type="method" value="EM"/>
    <property type="resolution" value="2.94 A"/>
    <property type="chains" value="C=1-297"/>
</dbReference>
<dbReference type="PDB" id="9AU7">
    <property type="method" value="EM"/>
    <property type="resolution" value="3.40 A"/>
    <property type="chains" value="C=1-297"/>
</dbReference>
<dbReference type="PDBsum" id="8P0X"/>
<dbReference type="PDBsum" id="8SYN"/>
<dbReference type="PDBsum" id="8SYO"/>
<dbReference type="PDBsum" id="9AU7"/>
<dbReference type="EMDB" id="EMD-17341"/>
<dbReference type="EMDB" id="EMD-17342"/>
<dbReference type="EMDB" id="EMD-40885"/>
<dbReference type="EMDB" id="EMD-40886"/>
<dbReference type="EMDB" id="EMD-43872"/>
<dbReference type="EMDB" id="EMD-43873"/>
<dbReference type="SASBDB" id="O14972"/>
<dbReference type="SMR" id="O14972"/>
<dbReference type="BioGRID" id="115596">
    <property type="interactions" value="82"/>
</dbReference>
<dbReference type="ComplexPortal" id="CPX-2211">
    <property type="entry name" value="Commander complex"/>
</dbReference>
<dbReference type="DIP" id="DIP-47317N"/>
<dbReference type="FunCoup" id="O14972">
    <property type="interactions" value="3346"/>
</dbReference>
<dbReference type="IntAct" id="O14972">
    <property type="interactions" value="65"/>
</dbReference>
<dbReference type="MINT" id="O14972"/>
<dbReference type="STRING" id="9606.ENSP00000311399"/>
<dbReference type="iPTMnet" id="O14972"/>
<dbReference type="PhosphoSitePlus" id="O14972"/>
<dbReference type="BioMuta" id="DSCR3"/>
<dbReference type="jPOST" id="O14972"/>
<dbReference type="MassIVE" id="O14972"/>
<dbReference type="PaxDb" id="9606-ENSP00000311399"/>
<dbReference type="PeptideAtlas" id="O14972"/>
<dbReference type="ProteomicsDB" id="48343">
    <molecule id="O14972-1"/>
</dbReference>
<dbReference type="ProteomicsDB" id="6766"/>
<dbReference type="Pumba" id="O14972"/>
<dbReference type="Antibodypedia" id="8571">
    <property type="antibodies" value="133 antibodies from 22 providers"/>
</dbReference>
<dbReference type="DNASU" id="10311"/>
<dbReference type="Ensembl" id="ENST00000309117.11">
    <molecule id="O14972-1"/>
    <property type="protein sequence ID" value="ENSP00000311399.6"/>
    <property type="gene ID" value="ENSG00000157538.14"/>
</dbReference>
<dbReference type="Ensembl" id="ENST00000476950.5">
    <molecule id="O14972-2"/>
    <property type="protein sequence ID" value="ENSP00000419496.1"/>
    <property type="gene ID" value="ENSG00000157538.14"/>
</dbReference>
<dbReference type="GeneID" id="10311"/>
<dbReference type="KEGG" id="hsa:10311"/>
<dbReference type="MANE-Select" id="ENST00000309117.11">
    <property type="protein sequence ID" value="ENSP00000311399.6"/>
    <property type="RefSeq nucleotide sequence ID" value="NM_006052.2"/>
    <property type="RefSeq protein sequence ID" value="NP_006043.1"/>
</dbReference>
<dbReference type="UCSC" id="uc002ywf.2">
    <molecule id="O14972-1"/>
    <property type="organism name" value="human"/>
</dbReference>
<dbReference type="AGR" id="HGNC:3044"/>
<dbReference type="CTD" id="10311"/>
<dbReference type="DisGeNET" id="10311"/>
<dbReference type="GeneCards" id="VPS26C"/>
<dbReference type="HGNC" id="HGNC:3044">
    <property type="gene designation" value="VPS26C"/>
</dbReference>
<dbReference type="HPA" id="ENSG00000157538">
    <property type="expression patterns" value="Low tissue specificity"/>
</dbReference>
<dbReference type="MIM" id="605298">
    <property type="type" value="gene"/>
</dbReference>
<dbReference type="neXtProt" id="NX_O14972"/>
<dbReference type="OpenTargets" id="ENSG00000157538"/>
<dbReference type="PharmGKB" id="PA27496"/>
<dbReference type="VEuPathDB" id="HostDB:ENSG00000157538"/>
<dbReference type="eggNOG" id="KOG2717">
    <property type="taxonomic scope" value="Eukaryota"/>
</dbReference>
<dbReference type="GeneTree" id="ENSGT00950000183064"/>
<dbReference type="HOGENOM" id="CLU_056829_0_0_1"/>
<dbReference type="InParanoid" id="O14972"/>
<dbReference type="OMA" id="CVTMPIT"/>
<dbReference type="OrthoDB" id="10263384at2759"/>
<dbReference type="PAN-GO" id="O14972">
    <property type="GO annotations" value="2 GO annotations based on evolutionary models"/>
</dbReference>
<dbReference type="PhylomeDB" id="O14972"/>
<dbReference type="TreeFam" id="TF323199"/>
<dbReference type="PathwayCommons" id="O14972"/>
<dbReference type="SignaLink" id="O14972"/>
<dbReference type="BioGRID-ORCS" id="10311">
    <property type="hits" value="28 hits in 1154 CRISPR screens"/>
</dbReference>
<dbReference type="ChiTaRS" id="VPS26C">
    <property type="organism name" value="human"/>
</dbReference>
<dbReference type="GenomeRNAi" id="10311"/>
<dbReference type="Pharos" id="O14972">
    <property type="development level" value="Tbio"/>
</dbReference>
<dbReference type="PRO" id="PR:O14972"/>
<dbReference type="Proteomes" id="UP000005640">
    <property type="component" value="Chromosome 21"/>
</dbReference>
<dbReference type="RNAct" id="O14972">
    <property type="molecule type" value="protein"/>
</dbReference>
<dbReference type="Bgee" id="ENSG00000157538">
    <property type="expression patterns" value="Expressed in monocyte and 187 other cell types or tissues"/>
</dbReference>
<dbReference type="ExpressionAtlas" id="O14972">
    <property type="expression patterns" value="baseline and differential"/>
</dbReference>
<dbReference type="GO" id="GO:0005768">
    <property type="term" value="C:endosome"/>
    <property type="evidence" value="ECO:0000318"/>
    <property type="project" value="GO_Central"/>
</dbReference>
<dbReference type="GO" id="GO:0005634">
    <property type="term" value="C:nucleus"/>
    <property type="evidence" value="ECO:0007005"/>
    <property type="project" value="UniProtKB"/>
</dbReference>
<dbReference type="GO" id="GO:0032456">
    <property type="term" value="P:endocytic recycling"/>
    <property type="evidence" value="ECO:0000315"/>
    <property type="project" value="UniProtKB"/>
</dbReference>
<dbReference type="GO" id="GO:0006886">
    <property type="term" value="P:intracellular protein transport"/>
    <property type="evidence" value="ECO:0000318"/>
    <property type="project" value="GO_Central"/>
</dbReference>
<dbReference type="FunFam" id="2.60.40.640:FF:000008">
    <property type="entry name" value="Down syndrome critical region protein 3"/>
    <property type="match status" value="1"/>
</dbReference>
<dbReference type="FunFam" id="2.60.40.640:FF:000009">
    <property type="entry name" value="Down syndrome critical region protein 3"/>
    <property type="match status" value="1"/>
</dbReference>
<dbReference type="Gene3D" id="2.60.40.640">
    <property type="match status" value="2"/>
</dbReference>
<dbReference type="InterPro" id="IPR014752">
    <property type="entry name" value="Arrestin-like_C"/>
</dbReference>
<dbReference type="InterPro" id="IPR014756">
    <property type="entry name" value="Ig_E-set"/>
</dbReference>
<dbReference type="InterPro" id="IPR028934">
    <property type="entry name" value="Vps26-related"/>
</dbReference>
<dbReference type="PANTHER" id="PTHR12233">
    <property type="entry name" value="VACUOLAR PROTEIN SORTING 26 RELATED"/>
    <property type="match status" value="1"/>
</dbReference>
<dbReference type="Pfam" id="PF03643">
    <property type="entry name" value="Vps26"/>
    <property type="match status" value="1"/>
</dbReference>
<dbReference type="SUPFAM" id="SSF81296">
    <property type="entry name" value="E set domains"/>
    <property type="match status" value="1"/>
</dbReference>
<keyword id="KW-0002">3D-structure</keyword>
<keyword id="KW-0025">Alternative splicing</keyword>
<keyword id="KW-0967">Endosome</keyword>
<keyword id="KW-1267">Proteomics identification</keyword>
<keyword id="KW-1185">Reference proteome</keyword>
<proteinExistence type="evidence at protein level"/>
<name>VP26C_HUMAN</name>
<gene>
    <name evidence="9" type="primary">VPS26C</name>
    <name type="synonym">DCRA</name>
    <name evidence="9" type="synonym">DSCR3</name>
    <name type="synonym">DSCRA</name>
</gene>
<accession>O14972</accession>
<accession>B2R6T8</accession>
<accession>B7Z6B1</accession>
<accession>D3DSH4</accession>
<accession>Q2TAY6</accession>
<reference key="1">
    <citation type="journal article" date="1997" name="J. Biochem.">
        <title>Isolation of a novel human gene from the Down syndrome critical region of chromosome 21q22.2.</title>
        <authorList>
            <person name="Nakamura A."/>
            <person name="Hattori M."/>
            <person name="Sakaki Y."/>
        </authorList>
    </citation>
    <scope>NUCLEOTIDE SEQUENCE [MRNA] (ISOFORM 1)</scope>
    <source>
        <tissue>Fetal brain</tissue>
    </source>
</reference>
<reference key="2">
    <citation type="journal article" date="2004" name="Nat. Genet.">
        <title>Complete sequencing and characterization of 21,243 full-length human cDNAs.</title>
        <authorList>
            <person name="Ota T."/>
            <person name="Suzuki Y."/>
            <person name="Nishikawa T."/>
            <person name="Otsuki T."/>
            <person name="Sugiyama T."/>
            <person name="Irie R."/>
            <person name="Wakamatsu A."/>
            <person name="Hayashi K."/>
            <person name="Sato H."/>
            <person name="Nagai K."/>
            <person name="Kimura K."/>
            <person name="Makita H."/>
            <person name="Sekine M."/>
            <person name="Obayashi M."/>
            <person name="Nishi T."/>
            <person name="Shibahara T."/>
            <person name="Tanaka T."/>
            <person name="Ishii S."/>
            <person name="Yamamoto J."/>
            <person name="Saito K."/>
            <person name="Kawai Y."/>
            <person name="Isono Y."/>
            <person name="Nakamura Y."/>
            <person name="Nagahari K."/>
            <person name="Murakami K."/>
            <person name="Yasuda T."/>
            <person name="Iwayanagi T."/>
            <person name="Wagatsuma M."/>
            <person name="Shiratori A."/>
            <person name="Sudo H."/>
            <person name="Hosoiri T."/>
            <person name="Kaku Y."/>
            <person name="Kodaira H."/>
            <person name="Kondo H."/>
            <person name="Sugawara M."/>
            <person name="Takahashi M."/>
            <person name="Kanda K."/>
            <person name="Yokoi T."/>
            <person name="Furuya T."/>
            <person name="Kikkawa E."/>
            <person name="Omura Y."/>
            <person name="Abe K."/>
            <person name="Kamihara K."/>
            <person name="Katsuta N."/>
            <person name="Sato K."/>
            <person name="Tanikawa M."/>
            <person name="Yamazaki M."/>
            <person name="Ninomiya K."/>
            <person name="Ishibashi T."/>
            <person name="Yamashita H."/>
            <person name="Murakawa K."/>
            <person name="Fujimori K."/>
            <person name="Tanai H."/>
            <person name="Kimata M."/>
            <person name="Watanabe M."/>
            <person name="Hiraoka S."/>
            <person name="Chiba Y."/>
            <person name="Ishida S."/>
            <person name="Ono Y."/>
            <person name="Takiguchi S."/>
            <person name="Watanabe S."/>
            <person name="Yosida M."/>
            <person name="Hotuta T."/>
            <person name="Kusano J."/>
            <person name="Kanehori K."/>
            <person name="Takahashi-Fujii A."/>
            <person name="Hara H."/>
            <person name="Tanase T.-O."/>
            <person name="Nomura Y."/>
            <person name="Togiya S."/>
            <person name="Komai F."/>
            <person name="Hara R."/>
            <person name="Takeuchi K."/>
            <person name="Arita M."/>
            <person name="Imose N."/>
            <person name="Musashino K."/>
            <person name="Yuuki H."/>
            <person name="Oshima A."/>
            <person name="Sasaki N."/>
            <person name="Aotsuka S."/>
            <person name="Yoshikawa Y."/>
            <person name="Matsunawa H."/>
            <person name="Ichihara T."/>
            <person name="Shiohata N."/>
            <person name="Sano S."/>
            <person name="Moriya S."/>
            <person name="Momiyama H."/>
            <person name="Satoh N."/>
            <person name="Takami S."/>
            <person name="Terashima Y."/>
            <person name="Suzuki O."/>
            <person name="Nakagawa S."/>
            <person name="Senoh A."/>
            <person name="Mizoguchi H."/>
            <person name="Goto Y."/>
            <person name="Shimizu F."/>
            <person name="Wakebe H."/>
            <person name="Hishigaki H."/>
            <person name="Watanabe T."/>
            <person name="Sugiyama A."/>
            <person name="Takemoto M."/>
            <person name="Kawakami B."/>
            <person name="Yamazaki M."/>
            <person name="Watanabe K."/>
            <person name="Kumagai A."/>
            <person name="Itakura S."/>
            <person name="Fukuzumi Y."/>
            <person name="Fujimori Y."/>
            <person name="Komiyama M."/>
            <person name="Tashiro H."/>
            <person name="Tanigami A."/>
            <person name="Fujiwara T."/>
            <person name="Ono T."/>
            <person name="Yamada K."/>
            <person name="Fujii Y."/>
            <person name="Ozaki K."/>
            <person name="Hirao M."/>
            <person name="Ohmori Y."/>
            <person name="Kawabata A."/>
            <person name="Hikiji T."/>
            <person name="Kobatake N."/>
            <person name="Inagaki H."/>
            <person name="Ikema Y."/>
            <person name="Okamoto S."/>
            <person name="Okitani R."/>
            <person name="Kawakami T."/>
            <person name="Noguchi S."/>
            <person name="Itoh T."/>
            <person name="Shigeta K."/>
            <person name="Senba T."/>
            <person name="Matsumura K."/>
            <person name="Nakajima Y."/>
            <person name="Mizuno T."/>
            <person name="Morinaga M."/>
            <person name="Sasaki M."/>
            <person name="Togashi T."/>
            <person name="Oyama M."/>
            <person name="Hata H."/>
            <person name="Watanabe M."/>
            <person name="Komatsu T."/>
            <person name="Mizushima-Sugano J."/>
            <person name="Satoh T."/>
            <person name="Shirai Y."/>
            <person name="Takahashi Y."/>
            <person name="Nakagawa K."/>
            <person name="Okumura K."/>
            <person name="Nagase T."/>
            <person name="Nomura N."/>
            <person name="Kikuchi H."/>
            <person name="Masuho Y."/>
            <person name="Yamashita R."/>
            <person name="Nakai K."/>
            <person name="Yada T."/>
            <person name="Nakamura Y."/>
            <person name="Ohara O."/>
            <person name="Isogai T."/>
            <person name="Sugano S."/>
        </authorList>
    </citation>
    <scope>NUCLEOTIDE SEQUENCE [LARGE SCALE MRNA] (ISOFORMS 1 AND 2)</scope>
    <source>
        <tissue>Thymus</tissue>
    </source>
</reference>
<reference key="3">
    <citation type="journal article" date="2000" name="Nature">
        <title>The DNA sequence of human chromosome 21.</title>
        <authorList>
            <person name="Hattori M."/>
            <person name="Fujiyama A."/>
            <person name="Taylor T.D."/>
            <person name="Watanabe H."/>
            <person name="Yada T."/>
            <person name="Park H.-S."/>
            <person name="Toyoda A."/>
            <person name="Ishii K."/>
            <person name="Totoki Y."/>
            <person name="Choi D.-K."/>
            <person name="Groner Y."/>
            <person name="Soeda E."/>
            <person name="Ohki M."/>
            <person name="Takagi T."/>
            <person name="Sakaki Y."/>
            <person name="Taudien S."/>
            <person name="Blechschmidt K."/>
            <person name="Polley A."/>
            <person name="Menzel U."/>
            <person name="Delabar J."/>
            <person name="Kumpf K."/>
            <person name="Lehmann R."/>
            <person name="Patterson D."/>
            <person name="Reichwald K."/>
            <person name="Rump A."/>
            <person name="Schillhabel M."/>
            <person name="Schudy A."/>
            <person name="Zimmermann W."/>
            <person name="Rosenthal A."/>
            <person name="Kudoh J."/>
            <person name="Shibuya K."/>
            <person name="Kawasaki K."/>
            <person name="Asakawa S."/>
            <person name="Shintani A."/>
            <person name="Sasaki T."/>
            <person name="Nagamine K."/>
            <person name="Mitsuyama S."/>
            <person name="Antonarakis S.E."/>
            <person name="Minoshima S."/>
            <person name="Shimizu N."/>
            <person name="Nordsiek G."/>
            <person name="Hornischer K."/>
            <person name="Brandt P."/>
            <person name="Scharfe M."/>
            <person name="Schoen O."/>
            <person name="Desario A."/>
            <person name="Reichelt J."/>
            <person name="Kauer G."/>
            <person name="Bloecker H."/>
            <person name="Ramser J."/>
            <person name="Beck A."/>
            <person name="Klages S."/>
            <person name="Hennig S."/>
            <person name="Riesselmann L."/>
            <person name="Dagand E."/>
            <person name="Wehrmeyer S."/>
            <person name="Borzym K."/>
            <person name="Gardiner K."/>
            <person name="Nizetic D."/>
            <person name="Francis F."/>
            <person name="Lehrach H."/>
            <person name="Reinhardt R."/>
            <person name="Yaspo M.-L."/>
        </authorList>
    </citation>
    <scope>NUCLEOTIDE SEQUENCE [LARGE SCALE GENOMIC DNA]</scope>
</reference>
<reference key="4">
    <citation type="submission" date="2005-09" db="EMBL/GenBank/DDBJ databases">
        <authorList>
            <person name="Mural R.J."/>
            <person name="Istrail S."/>
            <person name="Sutton G.G."/>
            <person name="Florea L."/>
            <person name="Halpern A.L."/>
            <person name="Mobarry C.M."/>
            <person name="Lippert R."/>
            <person name="Walenz B."/>
            <person name="Shatkay H."/>
            <person name="Dew I."/>
            <person name="Miller J.R."/>
            <person name="Flanigan M.J."/>
            <person name="Edwards N.J."/>
            <person name="Bolanos R."/>
            <person name="Fasulo D."/>
            <person name="Halldorsson B.V."/>
            <person name="Hannenhalli S."/>
            <person name="Turner R."/>
            <person name="Yooseph S."/>
            <person name="Lu F."/>
            <person name="Nusskern D.R."/>
            <person name="Shue B.C."/>
            <person name="Zheng X.H."/>
            <person name="Zhong F."/>
            <person name="Delcher A.L."/>
            <person name="Huson D.H."/>
            <person name="Kravitz S.A."/>
            <person name="Mouchard L."/>
            <person name="Reinert K."/>
            <person name="Remington K.A."/>
            <person name="Clark A.G."/>
            <person name="Waterman M.S."/>
            <person name="Eichler E.E."/>
            <person name="Adams M.D."/>
            <person name="Hunkapiller M.W."/>
            <person name="Myers E.W."/>
            <person name="Venter J.C."/>
        </authorList>
    </citation>
    <scope>NUCLEOTIDE SEQUENCE [LARGE SCALE GENOMIC DNA]</scope>
</reference>
<reference key="5">
    <citation type="journal article" date="2004" name="Genome Res.">
        <title>The status, quality, and expansion of the NIH full-length cDNA project: the Mammalian Gene Collection (MGC).</title>
        <authorList>
            <consortium name="The MGC Project Team"/>
        </authorList>
    </citation>
    <scope>NUCLEOTIDE SEQUENCE [LARGE SCALE MRNA] (ISOFORM 1)</scope>
    <source>
        <tissue>Skin</tissue>
    </source>
</reference>
<reference key="6">
    <citation type="journal article" date="2017" name="Nat. Cell Biol.">
        <title>Retriever is a multiprotein complex for retromer-independent endosomal cargo recycling.</title>
        <authorList>
            <person name="McNally K.E."/>
            <person name="Faulkner R."/>
            <person name="Steinberg F."/>
            <person name="Gallon M."/>
            <person name="Ghai R."/>
            <person name="Pim D."/>
            <person name="Langton P."/>
            <person name="Pearson N."/>
            <person name="Danson C.M."/>
            <person name="Naegele H."/>
            <person name="Morris L.L."/>
            <person name="Singla A."/>
            <person name="Overlee B.L."/>
            <person name="Heesom K.J."/>
            <person name="Sessions R."/>
            <person name="Banks L."/>
            <person name="Collins B.M."/>
            <person name="Berger I."/>
            <person name="Billadeau D.D."/>
            <person name="Burstein E."/>
            <person name="Cullen P.J."/>
        </authorList>
    </citation>
    <scope>FUNCTION</scope>
    <scope>INTERACTION WITH SNX17 AND SNX31</scope>
    <scope>IDENTIFICATION IN THE RETRIEVER COMPLEX</scope>
    <scope>SUBCELLULAR LOCATION</scope>
    <scope>FUNCTION (MICROBIAL INFECTION)</scope>
</reference>
<reference key="7">
    <citation type="journal article" date="2023" name="Cell">
        <title>Structure of the endosomal commander complex linked to Ritscher-Schinzel syndrome.</title>
        <authorList>
            <person name="Healy M.D."/>
            <person name="McNally K.E."/>
            <person name="Butkovic R."/>
            <person name="Chilton M."/>
            <person name="Kato K."/>
            <person name="Sacharz J."/>
            <person name="McConville C."/>
            <person name="Moody E.R.R."/>
            <person name="Shaw S."/>
            <person name="Planelles-Herrero V.J."/>
            <person name="Yadav S.K.N."/>
            <person name="Ross J."/>
            <person name="Borucu U."/>
            <person name="Palmer C.S."/>
            <person name="Chen K.E."/>
            <person name="Croll T.I."/>
            <person name="Hall R.J."/>
            <person name="Caruana N.J."/>
            <person name="Ghai R."/>
            <person name="Nguyen T.H.D."/>
            <person name="Heesom K.J."/>
            <person name="Saitoh S."/>
            <person name="Berger I."/>
            <person name="Schaffitzel C."/>
            <person name="Williams T.A."/>
            <person name="Stroud D.A."/>
            <person name="Derivery E."/>
            <person name="Collins B.M."/>
            <person name="Cullen P.J."/>
        </authorList>
    </citation>
    <scope>FUNCTION</scope>
    <scope>SUBUNIT</scope>
    <scope>INTERACTION WITH VPS35L</scope>
</reference>
<reference evidence="13" key="8">
    <citation type="journal article" date="2024" name="Nat. Commun.">
        <title>Structural basis for Retriever-SNX17 assembly and endosomal sorting.</title>
        <authorList>
            <person name="Singla A."/>
            <person name="Boesch D.J."/>
            <person name="Fung H.Y.J."/>
            <person name="Ngoka C."/>
            <person name="Enriquez A.S."/>
            <person name="Song R."/>
            <person name="Kramer D.A."/>
            <person name="Han Y."/>
            <person name="Banarer E."/>
            <person name="Lemoff A."/>
            <person name="Juneja P."/>
            <person name="Billadeau D.D."/>
            <person name="Bai X."/>
            <person name="Chen Z."/>
            <person name="Turer E.E."/>
            <person name="Burstein E."/>
            <person name="Chen B."/>
        </authorList>
    </citation>
    <scope>STRUCTURE BY ELECTRON MICROSCOPY (3.40 ANGSTROMS) IN COMPLEX WITH SNX17</scope>
    <scope>FUNCTION</scope>
    <scope>SUBUNIT</scope>
    <scope>INTERACTION WITH SNX17</scope>
</reference>
<reference evidence="11 12" key="9">
    <citation type="journal article" date="2024" name="Nat. Struct. Mol. Biol.">
        <title>Structural organization of the retriever-CCC endosomal recycling complex.</title>
        <authorList>
            <person name="Boesch D.J."/>
            <person name="Singla A."/>
            <person name="Han Y."/>
            <person name="Kramer D.A."/>
            <person name="Liu Q."/>
            <person name="Suzuki K."/>
            <person name="Juneja P."/>
            <person name="Zhao X."/>
            <person name="Long X."/>
            <person name="Medlyn M.J."/>
            <person name="Billadeau D.D."/>
            <person name="Chen Z."/>
            <person name="Chen B."/>
            <person name="Burstein E."/>
        </authorList>
    </citation>
    <scope>STRUCTURE BY ELECTRON MICROSCOPY (2.94 ANGSTROMS) OF THE RETRIEVER COMPLEX IN COMPLEX WITH CCDC22 AND CCDC93</scope>
    <scope>FUNCTION</scope>
    <scope>SUBUNIT</scope>
</reference>
<reference evidence="10" key="10">
    <citation type="journal article" date="2024" name="Nat. Struct. Mol. Biol.">
        <title>Structure and interactions of the endogenous human commander complex.</title>
        <authorList>
            <person name="Laulumaa S."/>
            <person name="Kumpula E.P."/>
            <person name="Huiskonen J.T."/>
            <person name="Varjosalo M."/>
        </authorList>
    </citation>
    <scope>STRUCTURE BY ELECTRON MICROSCOPY (7.50 ANGSTROMS) OF THE RETRIEVER COMPLEX IN COMPLEX WITH CCDC22 AND CCDC93</scope>
    <scope>FUNCTION</scope>
    <scope>SUBUNIT</scope>
</reference>
<protein>
    <recommendedName>
        <fullName evidence="7">Vacuolar protein sorting-associated protein 26C</fullName>
    </recommendedName>
    <alternativeName>
        <fullName>Down syndrome critical region protein 3</fullName>
    </alternativeName>
    <alternativeName>
        <fullName>Down syndrome critical region protein A</fullName>
    </alternativeName>
</protein>
<sequence>MGTALDIKIKRANKVYHAGEVLSGVVVISSKDSVQHQGVSLTMEGTVNLQLSAKSVGVFEAFYNSVKPIQIINSTIEMVKPGKFPSGKTEIPFEFPLHLKGNKVLYETYHGVFVNIQYTLRCDMKRSLLAKDLTKTCEFIVHSAPQKGKFTPSPVDFTITPETLQNVKERALLPKFLLRGHLNSTNCVITQPLTGELVVESSEAAIRSVELQLVRVETCGCAEGYARDATEIQNIQIADGDVCRGLSVPIYMVFPRLFTCPTLETTNFKVEFEVNIVVLLHPDHLITENFPLKLCRI</sequence>